<protein>
    <recommendedName>
        <fullName>U3 small nucleolar ribonucleoprotein protein IMP3</fullName>
        <shortName>U3 snoRNP protein IMP3</shortName>
    </recommendedName>
    <alternativeName>
        <fullName>Interacting with MPP10 protein 3</fullName>
    </alternativeName>
</protein>
<keyword id="KW-0002">3D-structure</keyword>
<keyword id="KW-0539">Nucleus</keyword>
<keyword id="KW-1185">Reference proteome</keyword>
<keyword id="KW-0687">Ribonucleoprotein</keyword>
<keyword id="KW-0690">Ribosome biogenesis</keyword>
<keyword id="KW-0694">RNA-binding</keyword>
<keyword id="KW-0698">rRNA processing</keyword>
<keyword id="KW-0699">rRNA-binding</keyword>
<feature type="chain" id="PRO_0000132712" description="U3 small nucleolar ribonucleoprotein protein IMP3">
    <location>
        <begin position="1"/>
        <end position="183"/>
    </location>
</feature>
<feature type="domain" description="S4 RNA-binding" evidence="1">
    <location>
        <begin position="109"/>
        <end position="175"/>
    </location>
</feature>
<feature type="helix" evidence="6">
    <location>
        <begin position="29"/>
        <end position="35"/>
    </location>
</feature>
<feature type="helix" evidence="6">
    <location>
        <begin position="41"/>
        <end position="62"/>
    </location>
</feature>
<feature type="helix" evidence="6">
    <location>
        <begin position="69"/>
        <end position="84"/>
    </location>
</feature>
<feature type="helix" evidence="6">
    <location>
        <begin position="94"/>
        <end position="96"/>
    </location>
</feature>
<feature type="helix" evidence="6">
    <location>
        <begin position="97"/>
        <end position="100"/>
    </location>
</feature>
<feature type="helix" evidence="6">
    <location>
        <begin position="103"/>
        <end position="107"/>
    </location>
</feature>
<feature type="helix" evidence="6">
    <location>
        <begin position="111"/>
        <end position="117"/>
    </location>
</feature>
<feature type="strand" evidence="6">
    <location>
        <begin position="120"/>
        <end position="123"/>
    </location>
</feature>
<feature type="helix" evidence="6">
    <location>
        <begin position="124"/>
        <end position="132"/>
    </location>
</feature>
<feature type="strand" evidence="6">
    <location>
        <begin position="136"/>
        <end position="138"/>
    </location>
</feature>
<feature type="turn" evidence="6">
    <location>
        <begin position="152"/>
        <end position="156"/>
    </location>
</feature>
<feature type="strand" evidence="6">
    <location>
        <begin position="158"/>
        <end position="160"/>
    </location>
</feature>
<proteinExistence type="evidence at protein level"/>
<sequence length="183" mass="21885">MVRKLKHHEQKLLKKVDFLEWKQDQGHRDTQVMRTYHIQNREDYHKYNRICGDIRRLANKLSLLPPTDPFRRKHEQLLLDKLYAMGVLTTKSKISDLENKVTVSAICRRRLPVIMHRLKMAETIQDAVKFIEQGHVRVGPNLINDPAYLVTRNMEDYVTWVDNSKIKKTLLRYRNQIDDFDFS</sequence>
<gene>
    <name type="primary">IMP3</name>
    <name type="ordered locus">YHR148W</name>
</gene>
<accession>P32899</accession>
<accession>D3DL97</accession>
<evidence type="ECO:0000255" key="1">
    <source>
        <dbReference type="PROSITE-ProRule" id="PRU00182"/>
    </source>
</evidence>
<evidence type="ECO:0000269" key="2">
    <source>
    </source>
</evidence>
<evidence type="ECO:0000269" key="3">
    <source>
    </source>
</evidence>
<evidence type="ECO:0000269" key="4">
    <source>
    </source>
</evidence>
<evidence type="ECO:0000305" key="5"/>
<evidence type="ECO:0007829" key="6">
    <source>
        <dbReference type="PDB" id="5WXM"/>
    </source>
</evidence>
<organism>
    <name type="scientific">Saccharomyces cerevisiae (strain ATCC 204508 / S288c)</name>
    <name type="common">Baker's yeast</name>
    <dbReference type="NCBI Taxonomy" id="559292"/>
    <lineage>
        <taxon>Eukaryota</taxon>
        <taxon>Fungi</taxon>
        <taxon>Dikarya</taxon>
        <taxon>Ascomycota</taxon>
        <taxon>Saccharomycotina</taxon>
        <taxon>Saccharomycetes</taxon>
        <taxon>Saccharomycetales</taxon>
        <taxon>Saccharomycetaceae</taxon>
        <taxon>Saccharomyces</taxon>
    </lineage>
</organism>
<name>IMP3_YEAST</name>
<comment type="function">
    <text evidence="2 4">Required for the early cleavages at sites A0, A1 and A2 during 18S ribosomal pre-RNA processing.</text>
</comment>
<comment type="subunit">
    <text evidence="3 4">Component of a heterotrimeric complex containing IMP3, IMP4 and MPP10. Interacts with MPP10. Component of the ribosomal small subunit (SSU) processome composed of at least 40 protein subunits and snoRNA U3.</text>
</comment>
<comment type="interaction">
    <interactant intactId="EBI-9237">
        <id>P32899</id>
    </interactant>
    <interactant intactId="EBI-6482">
        <id>P38333</id>
        <label>ENP1</label>
    </interactant>
    <organismsDiffer>false</organismsDiffer>
    <experiments>5</experiments>
</comment>
<comment type="interaction">
    <interactant intactId="EBI-9237">
        <id>P32899</id>
    </interactant>
    <interactant intactId="EBI-11168">
        <id>P47083</id>
        <label>MPP10</label>
    </interactant>
    <organismsDiffer>false</organismsDiffer>
    <experiments>8</experiments>
</comment>
<comment type="interaction">
    <interactant intactId="EBI-9237">
        <id>P32899</id>
    </interactant>
    <interactant intactId="EBI-36084">
        <id>Q12136</id>
        <label>SAS10</label>
    </interactant>
    <organismsDiffer>false</organismsDiffer>
    <experiments>3</experiments>
</comment>
<comment type="interaction">
    <interactant intactId="EBI-9237">
        <id>P32899</id>
    </interactant>
    <interactant intactId="EBI-29168">
        <id>P53866</id>
        <label>SQS1</label>
    </interactant>
    <organismsDiffer>false</organismsDiffer>
    <experiments>2</experiments>
</comment>
<comment type="interaction">
    <interactant intactId="EBI-9237">
        <id>P32899</id>
    </interactant>
    <interactant intactId="EBI-4534">
        <id>P40362</id>
        <label>UTP18</label>
    </interactant>
    <organismsDiffer>false</organismsDiffer>
    <experiments>3</experiments>
</comment>
<comment type="interaction">
    <interactant intactId="EBI-9237">
        <id>P32899</id>
    </interactant>
    <interactant intactId="EBI-35844">
        <id>Q04177</id>
        <label>UTP5</label>
    </interactant>
    <organismsDiffer>false</organismsDiffer>
    <experiments>3</experiments>
</comment>
<comment type="subcellular location">
    <subcellularLocation>
        <location evidence="2">Nucleus</location>
        <location evidence="2">Nucleolus</location>
    </subcellularLocation>
</comment>
<comment type="similarity">
    <text evidence="5">Belongs to the universal ribosomal protein uS4 family.</text>
</comment>
<reference key="1">
    <citation type="journal article" date="1993" name="Curr. Genet.">
        <title>Molecular cloning and analysis of the nuclear gene MRP-L6 coding for a putative mitochondrial ribosomal protein from Saccharomyces cerevisiae.</title>
        <authorList>
            <person name="Schwank S."/>
            <person name="Harrer R."/>
            <person name="Schueller H.-J."/>
            <person name="Schweizer E."/>
        </authorList>
    </citation>
    <scope>NUCLEOTIDE SEQUENCE [GENOMIC DNA]</scope>
</reference>
<reference key="2">
    <citation type="journal article" date="1994" name="Science">
        <title>Complete nucleotide sequence of Saccharomyces cerevisiae chromosome VIII.</title>
        <authorList>
            <person name="Johnston M."/>
            <person name="Andrews S."/>
            <person name="Brinkman R."/>
            <person name="Cooper J."/>
            <person name="Ding H."/>
            <person name="Dover J."/>
            <person name="Du Z."/>
            <person name="Favello A."/>
            <person name="Fulton L."/>
            <person name="Gattung S."/>
            <person name="Geisel C."/>
            <person name="Kirsten J."/>
            <person name="Kucaba T."/>
            <person name="Hillier L.W."/>
            <person name="Jier M."/>
            <person name="Johnston L."/>
            <person name="Langston Y."/>
            <person name="Latreille P."/>
            <person name="Louis E.J."/>
            <person name="Macri C."/>
            <person name="Mardis E."/>
            <person name="Menezes S."/>
            <person name="Mouser L."/>
            <person name="Nhan M."/>
            <person name="Rifkin L."/>
            <person name="Riles L."/>
            <person name="St Peter H."/>
            <person name="Trevaskis E."/>
            <person name="Vaughan K."/>
            <person name="Vignati D."/>
            <person name="Wilcox L."/>
            <person name="Wohldman P."/>
            <person name="Waterston R."/>
            <person name="Wilson R."/>
            <person name="Vaudin M."/>
        </authorList>
    </citation>
    <scope>NUCLEOTIDE SEQUENCE [LARGE SCALE GENOMIC DNA]</scope>
    <source>
        <strain>ATCC 204508 / S288c</strain>
    </source>
</reference>
<reference key="3">
    <citation type="journal article" date="2014" name="G3 (Bethesda)">
        <title>The reference genome sequence of Saccharomyces cerevisiae: Then and now.</title>
        <authorList>
            <person name="Engel S.R."/>
            <person name="Dietrich F.S."/>
            <person name="Fisk D.G."/>
            <person name="Binkley G."/>
            <person name="Balakrishnan R."/>
            <person name="Costanzo M.C."/>
            <person name="Dwight S.S."/>
            <person name="Hitz B.C."/>
            <person name="Karra K."/>
            <person name="Nash R.S."/>
            <person name="Weng S."/>
            <person name="Wong E.D."/>
            <person name="Lloyd P."/>
            <person name="Skrzypek M.S."/>
            <person name="Miyasato S.R."/>
            <person name="Simison M."/>
            <person name="Cherry J.M."/>
        </authorList>
    </citation>
    <scope>GENOME REANNOTATION</scope>
    <source>
        <strain>ATCC 204508 / S288c</strain>
    </source>
</reference>
<reference key="4">
    <citation type="journal article" date="2007" name="Genome Res.">
        <title>Approaching a complete repository of sequence-verified protein-encoding clones for Saccharomyces cerevisiae.</title>
        <authorList>
            <person name="Hu Y."/>
            <person name="Rolfs A."/>
            <person name="Bhullar B."/>
            <person name="Murthy T.V.S."/>
            <person name="Zhu C."/>
            <person name="Berger M.F."/>
            <person name="Camargo A.A."/>
            <person name="Kelley F."/>
            <person name="McCarron S."/>
            <person name="Jepson D."/>
            <person name="Richardson A."/>
            <person name="Raphael J."/>
            <person name="Moreira D."/>
            <person name="Taycher E."/>
            <person name="Zuo D."/>
            <person name="Mohr S."/>
            <person name="Kane M.F."/>
            <person name="Williamson J."/>
            <person name="Simpson A.J.G."/>
            <person name="Bulyk M.L."/>
            <person name="Harlow E."/>
            <person name="Marsischky G."/>
            <person name="Kolodner R.D."/>
            <person name="LaBaer J."/>
        </authorList>
    </citation>
    <scope>NUCLEOTIDE SEQUENCE [GENOMIC DNA]</scope>
    <source>
        <strain>ATCC 204508 / S288c</strain>
    </source>
</reference>
<reference key="5">
    <citation type="journal article" date="1999" name="Mol. Cell. Biol.">
        <title>Imp3p and Imp4p, two specific components of the U3 small nucleolar ribonucleoprotein that are essential for pre-18S rRNA processing.</title>
        <authorList>
            <person name="Lee S.J."/>
            <person name="Baserga S.J."/>
        </authorList>
    </citation>
    <scope>FUNCTION</scope>
    <scope>SUBCELLULAR LOCATION</scope>
</reference>
<reference key="6">
    <citation type="journal article" date="2002" name="Nature">
        <title>A large nucleolar U3 ribonucleoprotein required for 18S ribosomal RNA biogenesis.</title>
        <authorList>
            <person name="Dragon F."/>
            <person name="Gallagher J.E.G."/>
            <person name="Compagnone-Post P.A."/>
            <person name="Mitchell B.M."/>
            <person name="Porwancher K.A."/>
            <person name="Wehner K.A."/>
            <person name="Wormsley S."/>
            <person name="Settlage R.E."/>
            <person name="Shabanowitz J."/>
            <person name="Osheim Y."/>
            <person name="Beyer A.L."/>
            <person name="Hunt D.F."/>
            <person name="Baserga S.J."/>
        </authorList>
    </citation>
    <scope>IDENTIFICATION IN SSU PROCESSOME BY MASS SPECTROMETRY</scope>
</reference>
<reference key="7">
    <citation type="journal article" date="2004" name="Proc. Natl. Acad. Sci. U.S.A.">
        <title>Imp3p and Imp4p mediate formation of essential U3-precursor rRNA (pre-rRNA) duplexes, possibly to recruit the small subunit processome to the pre-rRNA.</title>
        <authorList>
            <person name="Gerczei T."/>
            <person name="Correll C.C."/>
        </authorList>
    </citation>
    <scope>FUNCTION</scope>
    <scope>INTERACTION WITH MPP10</scope>
</reference>
<dbReference type="EMBL" id="X69480">
    <property type="protein sequence ID" value="CAA49237.1"/>
    <property type="molecule type" value="Genomic_DNA"/>
</dbReference>
<dbReference type="EMBL" id="U10397">
    <property type="protein sequence ID" value="AAB68981.1"/>
    <property type="molecule type" value="Genomic_DNA"/>
</dbReference>
<dbReference type="EMBL" id="AY558388">
    <property type="protein sequence ID" value="AAS56714.1"/>
    <property type="molecule type" value="Genomic_DNA"/>
</dbReference>
<dbReference type="EMBL" id="BK006934">
    <property type="protein sequence ID" value="DAA06841.1"/>
    <property type="molecule type" value="Genomic_DNA"/>
</dbReference>
<dbReference type="PIR" id="S33911">
    <property type="entry name" value="S33911"/>
</dbReference>
<dbReference type="RefSeq" id="NP_012018.1">
    <property type="nucleotide sequence ID" value="NM_001179279.1"/>
</dbReference>
<dbReference type="PDB" id="5WLC">
    <property type="method" value="EM"/>
    <property type="resolution" value="3.80 A"/>
    <property type="chains" value="LZ=1-183"/>
</dbReference>
<dbReference type="PDB" id="5WXM">
    <property type="method" value="X-ray"/>
    <property type="resolution" value="2.30 A"/>
    <property type="chains" value="A/B=26-183"/>
</dbReference>
<dbReference type="PDB" id="5WYJ">
    <property type="method" value="EM"/>
    <property type="resolution" value="8.70 A"/>
    <property type="chains" value="MA=1-183"/>
</dbReference>
<dbReference type="PDB" id="5WYK">
    <property type="method" value="EM"/>
    <property type="resolution" value="4.50 A"/>
    <property type="chains" value="MA=1-183"/>
</dbReference>
<dbReference type="PDB" id="6KE6">
    <property type="method" value="EM"/>
    <property type="resolution" value="3.40 A"/>
    <property type="chains" value="5F=1-183"/>
</dbReference>
<dbReference type="PDB" id="6LQP">
    <property type="method" value="EM"/>
    <property type="resolution" value="3.20 A"/>
    <property type="chains" value="5F=1-183"/>
</dbReference>
<dbReference type="PDB" id="6LQQ">
    <property type="method" value="EM"/>
    <property type="resolution" value="4.10 A"/>
    <property type="chains" value="5F=1-183"/>
</dbReference>
<dbReference type="PDB" id="6LQR">
    <property type="method" value="EM"/>
    <property type="resolution" value="8.60 A"/>
    <property type="chains" value="5F=1-183"/>
</dbReference>
<dbReference type="PDB" id="6LQS">
    <property type="method" value="EM"/>
    <property type="resolution" value="3.80 A"/>
    <property type="chains" value="5F=1-183"/>
</dbReference>
<dbReference type="PDB" id="6LQT">
    <property type="method" value="EM"/>
    <property type="resolution" value="4.90 A"/>
    <property type="chains" value="5F=1-183"/>
</dbReference>
<dbReference type="PDB" id="6LQU">
    <property type="method" value="EM"/>
    <property type="resolution" value="3.70 A"/>
    <property type="chains" value="5F=1-183"/>
</dbReference>
<dbReference type="PDB" id="6LQV">
    <property type="method" value="EM"/>
    <property type="resolution" value="4.80 A"/>
    <property type="chains" value="5F=1-183"/>
</dbReference>
<dbReference type="PDB" id="6ND4">
    <property type="method" value="EM"/>
    <property type="resolution" value="4.30 A"/>
    <property type="chains" value="Z=1-183"/>
</dbReference>
<dbReference type="PDB" id="6ZQA">
    <property type="method" value="EM"/>
    <property type="resolution" value="4.40 A"/>
    <property type="chains" value="CI=1-183"/>
</dbReference>
<dbReference type="PDB" id="6ZQB">
    <property type="method" value="EM"/>
    <property type="resolution" value="3.90 A"/>
    <property type="chains" value="CI=1-183"/>
</dbReference>
<dbReference type="PDB" id="6ZQC">
    <property type="method" value="EM"/>
    <property type="resolution" value="3.80 A"/>
    <property type="chains" value="CI=1-183"/>
</dbReference>
<dbReference type="PDB" id="6ZQD">
    <property type="method" value="EM"/>
    <property type="resolution" value="3.80 A"/>
    <property type="chains" value="CI=1-183"/>
</dbReference>
<dbReference type="PDB" id="6ZQE">
    <property type="method" value="EM"/>
    <property type="resolution" value="7.10 A"/>
    <property type="chains" value="CI=1-183"/>
</dbReference>
<dbReference type="PDB" id="6ZQF">
    <property type="method" value="EM"/>
    <property type="resolution" value="4.90 A"/>
    <property type="chains" value="CI=1-183"/>
</dbReference>
<dbReference type="PDB" id="7AJT">
    <property type="method" value="EM"/>
    <property type="resolution" value="4.60 A"/>
    <property type="chains" value="CI=1-183"/>
</dbReference>
<dbReference type="PDB" id="7AJU">
    <property type="method" value="EM"/>
    <property type="resolution" value="3.80 A"/>
    <property type="chains" value="CI=1-183"/>
</dbReference>
<dbReference type="PDB" id="7D4I">
    <property type="method" value="EM"/>
    <property type="resolution" value="4.00 A"/>
    <property type="chains" value="5F=1-183"/>
</dbReference>
<dbReference type="PDB" id="7D5S">
    <property type="method" value="EM"/>
    <property type="resolution" value="4.60 A"/>
    <property type="chains" value="5F=1-183"/>
</dbReference>
<dbReference type="PDB" id="7D5T">
    <property type="method" value="EM"/>
    <property type="resolution" value="6.00 A"/>
    <property type="chains" value="5F=1-183"/>
</dbReference>
<dbReference type="PDB" id="7D63">
    <property type="method" value="EM"/>
    <property type="resolution" value="12.30 A"/>
    <property type="chains" value="5F=1-183"/>
</dbReference>
<dbReference type="PDB" id="7SUK">
    <property type="method" value="EM"/>
    <property type="resolution" value="3.99 A"/>
    <property type="chains" value="LZ=2-183"/>
</dbReference>
<dbReference type="PDBsum" id="5WLC"/>
<dbReference type="PDBsum" id="5WXM"/>
<dbReference type="PDBsum" id="5WYJ"/>
<dbReference type="PDBsum" id="5WYK"/>
<dbReference type="PDBsum" id="6KE6"/>
<dbReference type="PDBsum" id="6LQP"/>
<dbReference type="PDBsum" id="6LQQ"/>
<dbReference type="PDBsum" id="6LQR"/>
<dbReference type="PDBsum" id="6LQS"/>
<dbReference type="PDBsum" id="6LQT"/>
<dbReference type="PDBsum" id="6LQU"/>
<dbReference type="PDBsum" id="6LQV"/>
<dbReference type="PDBsum" id="6ND4"/>
<dbReference type="PDBsum" id="6ZQA"/>
<dbReference type="PDBsum" id="6ZQB"/>
<dbReference type="PDBsum" id="6ZQC"/>
<dbReference type="PDBsum" id="6ZQD"/>
<dbReference type="PDBsum" id="6ZQE"/>
<dbReference type="PDBsum" id="6ZQF"/>
<dbReference type="PDBsum" id="7AJT"/>
<dbReference type="PDBsum" id="7AJU"/>
<dbReference type="PDBsum" id="7D4I"/>
<dbReference type="PDBsum" id="7D5S"/>
<dbReference type="PDBsum" id="7D5T"/>
<dbReference type="PDBsum" id="7D63"/>
<dbReference type="PDBsum" id="7SUK"/>
<dbReference type="EMDB" id="EMD-0441"/>
<dbReference type="EMDB" id="EMD-0949"/>
<dbReference type="EMDB" id="EMD-0950"/>
<dbReference type="EMDB" id="EMD-0951"/>
<dbReference type="EMDB" id="EMD-0952"/>
<dbReference type="EMDB" id="EMD-0953"/>
<dbReference type="EMDB" id="EMD-0954"/>
<dbReference type="EMDB" id="EMD-0955"/>
<dbReference type="EMDB" id="EMD-11357"/>
<dbReference type="EMDB" id="EMD-11358"/>
<dbReference type="EMDB" id="EMD-11359"/>
<dbReference type="EMDB" id="EMD-11360"/>
<dbReference type="EMDB" id="EMD-11361"/>
<dbReference type="EMDB" id="EMD-11362"/>
<dbReference type="EMDB" id="EMD-11807"/>
<dbReference type="EMDB" id="EMD-11808"/>
<dbReference type="EMDB" id="EMD-25441"/>
<dbReference type="EMDB" id="EMD-30574"/>
<dbReference type="EMDB" id="EMD-30584"/>
<dbReference type="EMDB" id="EMD-30585"/>
<dbReference type="EMDB" id="EMD-30588"/>
<dbReference type="EMDB" id="EMD-6695"/>
<dbReference type="EMDB" id="EMD-6696"/>
<dbReference type="EMDB" id="EMD-8859"/>
<dbReference type="EMDB" id="EMD-9964"/>
<dbReference type="SMR" id="P32899"/>
<dbReference type="BioGRID" id="36582">
    <property type="interactions" value="81"/>
</dbReference>
<dbReference type="ComplexPortal" id="CPX-1893">
    <property type="entry name" value="MPP10 complex"/>
</dbReference>
<dbReference type="DIP" id="DIP-5009N"/>
<dbReference type="FunCoup" id="P32899">
    <property type="interactions" value="601"/>
</dbReference>
<dbReference type="IntAct" id="P32899">
    <property type="interactions" value="60"/>
</dbReference>
<dbReference type="MINT" id="P32899"/>
<dbReference type="STRING" id="4932.YHR148W"/>
<dbReference type="PaxDb" id="4932-YHR148W"/>
<dbReference type="PeptideAtlas" id="P32899"/>
<dbReference type="EnsemblFungi" id="YHR148W_mRNA">
    <property type="protein sequence ID" value="YHR148W"/>
    <property type="gene ID" value="YHR148W"/>
</dbReference>
<dbReference type="GeneID" id="856553"/>
<dbReference type="KEGG" id="sce:YHR148W"/>
<dbReference type="AGR" id="SGD:S000001191"/>
<dbReference type="SGD" id="S000001191">
    <property type="gene designation" value="IMP3"/>
</dbReference>
<dbReference type="VEuPathDB" id="FungiDB:YHR148W"/>
<dbReference type="eggNOG" id="KOG4655">
    <property type="taxonomic scope" value="Eukaryota"/>
</dbReference>
<dbReference type="GeneTree" id="ENSGT00550000075090"/>
<dbReference type="HOGENOM" id="CLU_097281_0_0_1"/>
<dbReference type="InParanoid" id="P32899"/>
<dbReference type="OMA" id="FRIKHEQ"/>
<dbReference type="OrthoDB" id="10248812at2759"/>
<dbReference type="BioCyc" id="YEAST:G3O-31183-MONOMER"/>
<dbReference type="Reactome" id="R-SCE-6791226">
    <property type="pathway name" value="Major pathway of rRNA processing in the nucleolus and cytosol"/>
</dbReference>
<dbReference type="BioGRID-ORCS" id="856553">
    <property type="hits" value="2 hits in 10 CRISPR screens"/>
</dbReference>
<dbReference type="PRO" id="PR:P32899"/>
<dbReference type="Proteomes" id="UP000002311">
    <property type="component" value="Chromosome VIII"/>
</dbReference>
<dbReference type="RNAct" id="P32899">
    <property type="molecule type" value="protein"/>
</dbReference>
<dbReference type="GO" id="GO:0030686">
    <property type="term" value="C:90S preribosome"/>
    <property type="evidence" value="ECO:0007005"/>
    <property type="project" value="SGD"/>
</dbReference>
<dbReference type="GO" id="GO:0034457">
    <property type="term" value="C:Mpp10 complex"/>
    <property type="evidence" value="ECO:0000314"/>
    <property type="project" value="SGD"/>
</dbReference>
<dbReference type="GO" id="GO:0005730">
    <property type="term" value="C:nucleolus"/>
    <property type="evidence" value="ECO:0000314"/>
    <property type="project" value="ComplexPortal"/>
</dbReference>
<dbReference type="GO" id="GO:0005654">
    <property type="term" value="C:nucleoplasm"/>
    <property type="evidence" value="ECO:0000304"/>
    <property type="project" value="Reactome"/>
</dbReference>
<dbReference type="GO" id="GO:0032040">
    <property type="term" value="C:small-subunit processome"/>
    <property type="evidence" value="ECO:0000314"/>
    <property type="project" value="SGD"/>
</dbReference>
<dbReference type="GO" id="GO:0140691">
    <property type="term" value="F:RNA folding chaperone"/>
    <property type="evidence" value="ECO:0000314"/>
    <property type="project" value="SGD"/>
</dbReference>
<dbReference type="GO" id="GO:0019843">
    <property type="term" value="F:rRNA binding"/>
    <property type="evidence" value="ECO:0007669"/>
    <property type="project" value="UniProtKB-KW"/>
</dbReference>
<dbReference type="GO" id="GO:0030515">
    <property type="term" value="F:snoRNA binding"/>
    <property type="evidence" value="ECO:0000314"/>
    <property type="project" value="SGD"/>
</dbReference>
<dbReference type="GO" id="GO:0030490">
    <property type="term" value="P:maturation of SSU-rRNA"/>
    <property type="evidence" value="ECO:0000303"/>
    <property type="project" value="ComplexPortal"/>
</dbReference>
<dbReference type="GO" id="GO:0042274">
    <property type="term" value="P:ribosomal small subunit biogenesis"/>
    <property type="evidence" value="ECO:0000314"/>
    <property type="project" value="SGD"/>
</dbReference>
<dbReference type="GO" id="GO:0006364">
    <property type="term" value="P:rRNA processing"/>
    <property type="evidence" value="ECO:0000314"/>
    <property type="project" value="SGD"/>
</dbReference>
<dbReference type="CDD" id="cd00165">
    <property type="entry name" value="S4"/>
    <property type="match status" value="1"/>
</dbReference>
<dbReference type="FunFam" id="3.10.290.10:FF:000006">
    <property type="entry name" value="U3 small nucleolar ribonucleoprotein IMP3"/>
    <property type="match status" value="1"/>
</dbReference>
<dbReference type="Gene3D" id="3.10.290.10">
    <property type="entry name" value="RNA-binding S4 domain"/>
    <property type="match status" value="1"/>
</dbReference>
<dbReference type="InterPro" id="IPR022801">
    <property type="entry name" value="Ribosomal_uS4"/>
</dbReference>
<dbReference type="InterPro" id="IPR001912">
    <property type="entry name" value="Ribosomal_uS4_N"/>
</dbReference>
<dbReference type="InterPro" id="IPR002942">
    <property type="entry name" value="S4_RNA-bd"/>
</dbReference>
<dbReference type="InterPro" id="IPR036986">
    <property type="entry name" value="S4_RNA-bd_sf"/>
</dbReference>
<dbReference type="PANTHER" id="PTHR11831">
    <property type="entry name" value="30S 40S RIBOSOMAL PROTEIN"/>
    <property type="match status" value="1"/>
</dbReference>
<dbReference type="PANTHER" id="PTHR11831:SF1">
    <property type="entry name" value="U3 SMALL NUCLEOLAR RIBONUCLEOPROTEIN PROTEIN IMP3"/>
    <property type="match status" value="1"/>
</dbReference>
<dbReference type="Pfam" id="PF00163">
    <property type="entry name" value="Ribosomal_S4"/>
    <property type="match status" value="1"/>
</dbReference>
<dbReference type="Pfam" id="PF01479">
    <property type="entry name" value="S4"/>
    <property type="match status" value="1"/>
</dbReference>
<dbReference type="SMART" id="SM01390">
    <property type="entry name" value="Ribosomal_S4"/>
    <property type="match status" value="1"/>
</dbReference>
<dbReference type="SMART" id="SM00363">
    <property type="entry name" value="S4"/>
    <property type="match status" value="1"/>
</dbReference>
<dbReference type="SUPFAM" id="SSF55174">
    <property type="entry name" value="Alpha-L RNA-binding motif"/>
    <property type="match status" value="1"/>
</dbReference>
<dbReference type="PROSITE" id="PS50889">
    <property type="entry name" value="S4"/>
    <property type="match status" value="1"/>
</dbReference>